<organism>
    <name type="scientific">Human cytomegalovirus (strain AD169)</name>
    <name type="common">HHV-5</name>
    <name type="synonym">Human herpesvirus 5</name>
    <dbReference type="NCBI Taxonomy" id="10360"/>
    <lineage>
        <taxon>Viruses</taxon>
        <taxon>Duplodnaviria</taxon>
        <taxon>Heunggongvirae</taxon>
        <taxon>Peploviricota</taxon>
        <taxon>Herviviricetes</taxon>
        <taxon>Herpesvirales</taxon>
        <taxon>Orthoherpesviridae</taxon>
        <taxon>Betaherpesvirinae</taxon>
        <taxon>Cytomegalovirus</taxon>
        <taxon>Cytomegalovirus humanbeta5</taxon>
        <taxon>Human cytomegalovirus</taxon>
    </lineage>
</organism>
<protein>
    <recommendedName>
        <fullName evidence="1">Major capsid protein</fullName>
        <shortName evidence="1">MCP</shortName>
    </recommendedName>
</protein>
<comment type="function">
    <text evidence="1">Self-assembles to form an icosahedral capsid with a T=16 symmetry, about 200 nm in diameter, and consisting of 150 hexons and 12 pentons (total of 162 capsomers). Hexons form the edges and faces of the capsid and are each composed of six MCP molecules. In contrast, one penton is found at each of the 12 vertices. Eleven of the pentons are MCP pentamers, while the last vertex is occupied by the portal complex. The capsid is surrounded by a layer of proteinaceous material designated the tegument which, in turn, is enclosed in an envelope of host cell-derived lipids containing virus-encoded glycoproteins.</text>
</comment>
<comment type="subunit">
    <text evidence="1">Homomultimer. Makes the hexons and eleven out of twelve pentons. Interacts with triplex proteins 1/TRX1 and 2/TRX2; adjacent capsomers are linked together in groups of three by triplexes, heterotrimeric complexes composed of one molecule of TRX1 and two molecules of TRX2. Interacts with scaffold protein; this interaction allows efficient MCP transport to the host nucleus. Interacts with capsid vertex component 2/CVC2. Interacts with the small capsomere-interacting protein/SCP.</text>
</comment>
<comment type="subcellular location">
    <subcellularLocation>
        <location evidence="1">Virion</location>
    </subcellularLocation>
    <subcellularLocation>
        <location evidence="1">Host nucleus</location>
    </subcellularLocation>
</comment>
<comment type="similarity">
    <text evidence="1">Belongs to the herpesviridae major capsid protein family.</text>
</comment>
<feature type="chain" id="PRO_0000115711" description="Major capsid protein">
    <location>
        <begin position="1"/>
        <end position="1370"/>
    </location>
</feature>
<feature type="helix" evidence="2">
    <location>
        <begin position="4"/>
        <end position="9"/>
    </location>
</feature>
<feature type="strand" evidence="2">
    <location>
        <begin position="12"/>
        <end position="15"/>
    </location>
</feature>
<feature type="helix" evidence="2">
    <location>
        <begin position="23"/>
        <end position="28"/>
    </location>
</feature>
<feature type="strand" evidence="2">
    <location>
        <begin position="32"/>
        <end position="40"/>
    </location>
</feature>
<feature type="helix" evidence="2">
    <location>
        <begin position="43"/>
        <end position="46"/>
    </location>
</feature>
<feature type="strand" evidence="2">
    <location>
        <begin position="50"/>
        <end position="59"/>
    </location>
</feature>
<feature type="helix" evidence="2">
    <location>
        <begin position="70"/>
        <end position="74"/>
    </location>
</feature>
<feature type="strand" evidence="2">
    <location>
        <begin position="75"/>
        <end position="79"/>
    </location>
</feature>
<feature type="helix" evidence="2">
    <location>
        <begin position="83"/>
        <end position="85"/>
    </location>
</feature>
<feature type="strand" evidence="2">
    <location>
        <begin position="90"/>
        <end position="96"/>
    </location>
</feature>
<feature type="strand" evidence="2">
    <location>
        <begin position="113"/>
        <end position="119"/>
    </location>
</feature>
<feature type="strand" evidence="2">
    <location>
        <begin position="125"/>
        <end position="132"/>
    </location>
</feature>
<feature type="helix" evidence="2">
    <location>
        <begin position="133"/>
        <end position="140"/>
    </location>
</feature>
<feature type="helix" evidence="2">
    <location>
        <begin position="147"/>
        <end position="185"/>
    </location>
</feature>
<feature type="helix" evidence="2">
    <location>
        <begin position="190"/>
        <end position="198"/>
    </location>
</feature>
<feature type="helix" evidence="2">
    <location>
        <begin position="209"/>
        <end position="225"/>
    </location>
</feature>
<feature type="helix" evidence="2">
    <location>
        <begin position="229"/>
        <end position="232"/>
    </location>
</feature>
<feature type="helix" evidence="2">
    <location>
        <begin position="236"/>
        <end position="248"/>
    </location>
</feature>
<feature type="strand" evidence="2">
    <location>
        <begin position="253"/>
        <end position="255"/>
    </location>
</feature>
<feature type="strand" evidence="2">
    <location>
        <begin position="258"/>
        <end position="263"/>
    </location>
</feature>
<feature type="strand" evidence="2">
    <location>
        <begin position="272"/>
        <end position="275"/>
    </location>
</feature>
<feature type="helix" evidence="2">
    <location>
        <begin position="277"/>
        <end position="286"/>
    </location>
</feature>
<feature type="helix" evidence="2">
    <location>
        <begin position="288"/>
        <end position="290"/>
    </location>
</feature>
<feature type="strand" evidence="2">
    <location>
        <begin position="291"/>
        <end position="301"/>
    </location>
</feature>
<feature type="helix" evidence="2">
    <location>
        <begin position="309"/>
        <end position="318"/>
    </location>
</feature>
<feature type="strand" evidence="2">
    <location>
        <begin position="319"/>
        <end position="324"/>
    </location>
</feature>
<feature type="helix" evidence="2">
    <location>
        <begin position="325"/>
        <end position="333"/>
    </location>
</feature>
<feature type="strand" evidence="2">
    <location>
        <begin position="338"/>
        <end position="341"/>
    </location>
</feature>
<feature type="helix" evidence="2">
    <location>
        <begin position="343"/>
        <end position="346"/>
    </location>
</feature>
<feature type="strand" evidence="2">
    <location>
        <begin position="352"/>
        <end position="362"/>
    </location>
</feature>
<feature type="strand" evidence="2">
    <location>
        <begin position="365"/>
        <end position="371"/>
    </location>
</feature>
<feature type="helix" evidence="2">
    <location>
        <begin position="373"/>
        <end position="376"/>
    </location>
</feature>
<feature type="strand" evidence="2">
    <location>
        <begin position="386"/>
        <end position="398"/>
    </location>
</feature>
<feature type="turn" evidence="2">
    <location>
        <begin position="411"/>
        <end position="413"/>
    </location>
</feature>
<feature type="helix" evidence="2">
    <location>
        <begin position="420"/>
        <end position="423"/>
    </location>
</feature>
<feature type="strand" evidence="2">
    <location>
        <begin position="427"/>
        <end position="431"/>
    </location>
</feature>
<feature type="strand" evidence="2">
    <location>
        <begin position="437"/>
        <end position="441"/>
    </location>
</feature>
<feature type="turn" evidence="2">
    <location>
        <begin position="442"/>
        <end position="445"/>
    </location>
</feature>
<feature type="helix" evidence="2">
    <location>
        <begin position="446"/>
        <end position="449"/>
    </location>
</feature>
<feature type="helix" evidence="2">
    <location>
        <begin position="452"/>
        <end position="455"/>
    </location>
</feature>
<feature type="helix" evidence="2">
    <location>
        <begin position="458"/>
        <end position="466"/>
    </location>
</feature>
<feature type="helix" evidence="2">
    <location>
        <begin position="474"/>
        <end position="478"/>
    </location>
</feature>
<feature type="turn" evidence="2">
    <location>
        <begin position="489"/>
        <end position="491"/>
    </location>
</feature>
<feature type="helix" evidence="2">
    <location>
        <begin position="492"/>
        <end position="494"/>
    </location>
</feature>
<feature type="helix" evidence="2">
    <location>
        <begin position="495"/>
        <end position="499"/>
    </location>
</feature>
<feature type="helix" evidence="2">
    <location>
        <begin position="509"/>
        <end position="512"/>
    </location>
</feature>
<feature type="helix" evidence="2">
    <location>
        <begin position="513"/>
        <end position="515"/>
    </location>
</feature>
<feature type="helix" evidence="2">
    <location>
        <begin position="518"/>
        <end position="521"/>
    </location>
</feature>
<feature type="helix" evidence="2">
    <location>
        <begin position="527"/>
        <end position="531"/>
    </location>
</feature>
<feature type="strand" evidence="2">
    <location>
        <begin position="537"/>
        <end position="544"/>
    </location>
</feature>
<feature type="strand" evidence="2">
    <location>
        <begin position="547"/>
        <end position="554"/>
    </location>
</feature>
<feature type="helix" evidence="2">
    <location>
        <begin position="558"/>
        <end position="560"/>
    </location>
</feature>
<feature type="turn" evidence="2">
    <location>
        <begin position="563"/>
        <end position="565"/>
    </location>
</feature>
<feature type="helix" evidence="2">
    <location>
        <begin position="568"/>
        <end position="581"/>
    </location>
</feature>
<feature type="helix" evidence="2">
    <location>
        <begin position="591"/>
        <end position="601"/>
    </location>
</feature>
<feature type="helix" evidence="2">
    <location>
        <begin position="609"/>
        <end position="617"/>
    </location>
</feature>
<feature type="helix" evidence="2">
    <location>
        <begin position="621"/>
        <end position="641"/>
    </location>
</feature>
<feature type="helix" evidence="2">
    <location>
        <begin position="651"/>
        <end position="660"/>
    </location>
</feature>
<feature type="turn" evidence="2">
    <location>
        <begin position="662"/>
        <end position="665"/>
    </location>
</feature>
<feature type="helix" evidence="2">
    <location>
        <begin position="668"/>
        <end position="688"/>
    </location>
</feature>
<feature type="turn" evidence="2">
    <location>
        <begin position="691"/>
        <end position="693"/>
    </location>
</feature>
<feature type="strand" evidence="2">
    <location>
        <begin position="697"/>
        <end position="702"/>
    </location>
</feature>
<feature type="helix" evidence="2">
    <location>
        <begin position="703"/>
        <end position="707"/>
    </location>
</feature>
<feature type="helix" evidence="2">
    <location>
        <begin position="709"/>
        <end position="711"/>
    </location>
</feature>
<feature type="strand" evidence="2">
    <location>
        <begin position="718"/>
        <end position="722"/>
    </location>
</feature>
<feature type="strand" evidence="2">
    <location>
        <begin position="731"/>
        <end position="738"/>
    </location>
</feature>
<feature type="helix" evidence="2">
    <location>
        <begin position="741"/>
        <end position="743"/>
    </location>
</feature>
<feature type="strand" evidence="2">
    <location>
        <begin position="744"/>
        <end position="746"/>
    </location>
</feature>
<feature type="strand" evidence="2">
    <location>
        <begin position="749"/>
        <end position="751"/>
    </location>
</feature>
<feature type="helix" evidence="2">
    <location>
        <begin position="754"/>
        <end position="759"/>
    </location>
</feature>
<feature type="strand" evidence="2">
    <location>
        <begin position="763"/>
        <end position="768"/>
    </location>
</feature>
<feature type="helix" evidence="2">
    <location>
        <begin position="775"/>
        <end position="786"/>
    </location>
</feature>
<feature type="helix" evidence="2">
    <location>
        <begin position="788"/>
        <end position="793"/>
    </location>
</feature>
<feature type="strand" evidence="2">
    <location>
        <begin position="798"/>
        <end position="802"/>
    </location>
</feature>
<feature type="helix" evidence="2">
    <location>
        <begin position="804"/>
        <end position="812"/>
    </location>
</feature>
<feature type="helix" evidence="2">
    <location>
        <begin position="815"/>
        <end position="818"/>
    </location>
</feature>
<feature type="helix" evidence="2">
    <location>
        <begin position="846"/>
        <end position="853"/>
    </location>
</feature>
<feature type="helix" evidence="2">
    <location>
        <begin position="855"/>
        <end position="861"/>
    </location>
</feature>
<feature type="turn" evidence="2">
    <location>
        <begin position="862"/>
        <end position="864"/>
    </location>
</feature>
<feature type="helix" evidence="2">
    <location>
        <begin position="872"/>
        <end position="880"/>
    </location>
</feature>
<feature type="helix" evidence="2">
    <location>
        <begin position="881"/>
        <end position="884"/>
    </location>
</feature>
<feature type="strand" evidence="2">
    <location>
        <begin position="891"/>
        <end position="897"/>
    </location>
</feature>
<feature type="turn" evidence="2">
    <location>
        <begin position="901"/>
        <end position="904"/>
    </location>
</feature>
<feature type="strand" evidence="2">
    <location>
        <begin position="905"/>
        <end position="907"/>
    </location>
</feature>
<feature type="strand" evidence="2">
    <location>
        <begin position="912"/>
        <end position="919"/>
    </location>
</feature>
<feature type="strand" evidence="2">
    <location>
        <begin position="921"/>
        <end position="925"/>
    </location>
</feature>
<feature type="strand" evidence="2">
    <location>
        <begin position="928"/>
        <end position="930"/>
    </location>
</feature>
<feature type="turn" evidence="2">
    <location>
        <begin position="931"/>
        <end position="933"/>
    </location>
</feature>
<feature type="strand" evidence="2">
    <location>
        <begin position="934"/>
        <end position="937"/>
    </location>
</feature>
<feature type="strand" evidence="2">
    <location>
        <begin position="940"/>
        <end position="943"/>
    </location>
</feature>
<feature type="helix" evidence="2">
    <location>
        <begin position="946"/>
        <end position="952"/>
    </location>
</feature>
<feature type="helix" evidence="2">
    <location>
        <begin position="954"/>
        <end position="962"/>
    </location>
</feature>
<feature type="helix" evidence="2">
    <location>
        <begin position="964"/>
        <end position="966"/>
    </location>
</feature>
<feature type="turn" evidence="2">
    <location>
        <begin position="977"/>
        <end position="979"/>
    </location>
</feature>
<feature type="helix" evidence="2">
    <location>
        <begin position="982"/>
        <end position="984"/>
    </location>
</feature>
<feature type="strand" evidence="2">
    <location>
        <begin position="985"/>
        <end position="987"/>
    </location>
</feature>
<feature type="helix" evidence="2">
    <location>
        <begin position="989"/>
        <end position="995"/>
    </location>
</feature>
<feature type="helix" evidence="2">
    <location>
        <begin position="1002"/>
        <end position="1010"/>
    </location>
</feature>
<feature type="helix" evidence="2">
    <location>
        <begin position="1017"/>
        <end position="1025"/>
    </location>
</feature>
<feature type="strand" evidence="2">
    <location>
        <begin position="1033"/>
        <end position="1050"/>
    </location>
</feature>
<feature type="strand" evidence="2">
    <location>
        <begin position="1055"/>
        <end position="1059"/>
    </location>
</feature>
<feature type="strand" evidence="2">
    <location>
        <begin position="1063"/>
        <end position="1068"/>
    </location>
</feature>
<feature type="strand" evidence="2">
    <location>
        <begin position="1070"/>
        <end position="1079"/>
    </location>
</feature>
<feature type="strand" evidence="2">
    <location>
        <begin position="1081"/>
        <end position="1085"/>
    </location>
</feature>
<feature type="strand" evidence="2">
    <location>
        <begin position="1087"/>
        <end position="1089"/>
    </location>
</feature>
<feature type="strand" evidence="2">
    <location>
        <begin position="1092"/>
        <end position="1104"/>
    </location>
</feature>
<feature type="helix" evidence="2">
    <location>
        <begin position="1113"/>
        <end position="1116"/>
    </location>
</feature>
<feature type="helix" evidence="2">
    <location>
        <begin position="1125"/>
        <end position="1135"/>
    </location>
</feature>
<feature type="helix" evidence="2">
    <location>
        <begin position="1145"/>
        <end position="1152"/>
    </location>
</feature>
<feature type="strand" evidence="2">
    <location>
        <begin position="1172"/>
        <end position="1177"/>
    </location>
</feature>
<feature type="helix" evidence="2">
    <location>
        <begin position="1183"/>
        <end position="1187"/>
    </location>
</feature>
<feature type="strand" evidence="2">
    <location>
        <begin position="1199"/>
        <end position="1202"/>
    </location>
</feature>
<feature type="helix" evidence="2">
    <location>
        <begin position="1207"/>
        <end position="1214"/>
    </location>
</feature>
<feature type="turn" evidence="2">
    <location>
        <begin position="1222"/>
        <end position="1224"/>
    </location>
</feature>
<feature type="strand" evidence="2">
    <location>
        <begin position="1225"/>
        <end position="1227"/>
    </location>
</feature>
<feature type="helix" evidence="2">
    <location>
        <begin position="1231"/>
        <end position="1234"/>
    </location>
</feature>
<feature type="helix" evidence="2">
    <location>
        <begin position="1239"/>
        <end position="1244"/>
    </location>
</feature>
<feature type="helix" evidence="2">
    <location>
        <begin position="1246"/>
        <end position="1252"/>
    </location>
</feature>
<feature type="helix" evidence="2">
    <location>
        <begin position="1263"/>
        <end position="1266"/>
    </location>
</feature>
<feature type="helix" evidence="2">
    <location>
        <begin position="1268"/>
        <end position="1273"/>
    </location>
</feature>
<feature type="helix" evidence="2">
    <location>
        <begin position="1278"/>
        <end position="1287"/>
    </location>
</feature>
<feature type="strand" evidence="2">
    <location>
        <begin position="1295"/>
        <end position="1299"/>
    </location>
</feature>
<feature type="strand" evidence="2">
    <location>
        <begin position="1305"/>
        <end position="1308"/>
    </location>
</feature>
<feature type="helix" evidence="2">
    <location>
        <begin position="1315"/>
        <end position="1318"/>
    </location>
</feature>
<feature type="strand" evidence="2">
    <location>
        <begin position="1321"/>
        <end position="1323"/>
    </location>
</feature>
<feature type="strand" evidence="2">
    <location>
        <begin position="1326"/>
        <end position="1329"/>
    </location>
</feature>
<feature type="helix" evidence="2">
    <location>
        <begin position="1330"/>
        <end position="1338"/>
    </location>
</feature>
<feature type="turn" evidence="2">
    <location>
        <begin position="1341"/>
        <end position="1345"/>
    </location>
</feature>
<feature type="strand" evidence="2">
    <location>
        <begin position="1354"/>
        <end position="1356"/>
    </location>
</feature>
<feature type="turn" evidence="2">
    <location>
        <begin position="1362"/>
        <end position="1365"/>
    </location>
</feature>
<feature type="helix" evidence="2">
    <location>
        <begin position="1366"/>
        <end position="1368"/>
    </location>
</feature>
<keyword id="KW-0002">3D-structure</keyword>
<keyword id="KW-0167">Capsid protein</keyword>
<keyword id="KW-1048">Host nucleus</keyword>
<keyword id="KW-1185">Reference proteome</keyword>
<keyword id="KW-1147">T=16 icosahedral capsid protein</keyword>
<keyword id="KW-0946">Virion</keyword>
<organismHost>
    <name type="scientific">Homo sapiens</name>
    <name type="common">Human</name>
    <dbReference type="NCBI Taxonomy" id="9606"/>
</organismHost>
<gene>
    <name evidence="1" type="primary">MCP</name>
    <name type="synonym">UL86</name>
</gene>
<proteinExistence type="evidence at protein level"/>
<sequence length="1370" mass="153872">MENWSALELLPKVGIPTDFLTHVKTSAGEEMFEALRIYYGDDPERYNIHFEAIFGTFCNRLEWVYFLTSGLAAAAHAIKFHDLNKLTTGKMLFHVQVPRVASGAGLPTSRQTTIMVTKYSEKSPITIPFELSAACLTYLRETFEGTILDKILNVEAMHTVLRALKNTADAMERGLIHSFLQTLLRKAPPYFVVQTLVENATLARQALNRIQRSNILQSFKAKMLATLFLLNRTRDRDYVLKFLTRLAEAATDSILDNPTTYTTSSGAKISGVMVSTANVMQIIMSLLSSHITKETVSAPATYGNFVLSPENAVTAISYHSILADFNSYKAHLTSGQPHLPNDSLSQAGAHSLTPLSMDVIRLGEKTVIMENLRRVYKNTDTKDPLERNVDLTFFFPVGLYLPEDRGYTTVESKVKLNDTVRNALPTTAYLLNRDRAVQKIDFVDALKTLCHPVLHEPAPCLQTFTERGPPSEPAMQRLLECRFQQEPMGGAARRIPHFYRVRREVPRTVNEMKQDFVVTDFYKVGNITLYTELHPFFDFTHCQENSETVALCTPRIVIGNLPDGLAPGPFHELRTWEIMEHMRLRPPPDYEETLRLFKTTVTSPNYPELCYLVDVLVHGNVDAFLLIRTFVARCIVNMFHTRQLLVFAHSYALVTLIAEHLADGALPPQLLFHYRNLVAVLRLVTRISALPGLNNGQLAEEPLSAYVNALHDHRLWPPFVTHLPRNMEGVQVVADRQPLNPANIEARHHGVSDVPRLGAMDADEPLFVDDYRATDDEWTLQKVFYLCLMPAMTNNRACGLGLNLKTLLVDLFYRPAFLLMPAATAVSTSGTTSKESTSGVTPEDSIAAQRQAVGEMLTELVEDVATDAHTPLLQACRELFLAVQFVGEHVKVLEVRAPLDHAQRQGLPDFISRQHVLYNGCCVVTAPKTLIEYSLPVPFHRFYSNPTICAALSDDIKRYVTEFPHYHRHDGGFPLPTAFAHEYHNWLRSPFSRYSATCPNVLHSVMTLAAMLYKISPVSLVLQTKAHIHPGFALTAVRTDTFEVDMLLYSGKSCTSVIINNPIVTKEERDISTTYHVTQNINTVDMGLGYTSNTCVAYVNRVRTDMGVRVQDLFRVFPMNVYRHDEVDRWIRHAAGVERPQLLDTETISMLTFGSMSERNAAATVHGQKAACELILTPVTMDVNYFKIPNNPRGRASCMLAVDPYDTEAATKAIYDHREADAQTFAATHNPWASQAGCLSDVLYNTRHRERLGYNSKFYSPCAQYFNTEEIIAANKTLFKTIDEYLLRAKDCIRGDTDTQYVCVEGTEQLIENPCRLTQEALPILSTTTLALMETKLKGGAGAFATSETHFGNYVVGEIIPLQQSMLFNS</sequence>
<name>MCP_HCMVA</name>
<dbReference type="EMBL" id="X17403">
    <property type="protein sequence ID" value="CAA35360.1"/>
    <property type="molecule type" value="Genomic_DNA"/>
</dbReference>
<dbReference type="EMBL" id="M25411">
    <property type="protein sequence ID" value="AAA51532.1"/>
    <property type="molecule type" value="Genomic_DNA"/>
</dbReference>
<dbReference type="EMBL" id="BK000394">
    <property type="protein sequence ID" value="DAA00183.1"/>
    <property type="molecule type" value="Genomic_DNA"/>
</dbReference>
<dbReference type="PIR" id="A31882">
    <property type="entry name" value="VCBECA"/>
</dbReference>
<dbReference type="RefSeq" id="YP_081534.1">
    <property type="nucleotide sequence ID" value="NC_006273.2"/>
</dbReference>
<dbReference type="PDB" id="5VKU">
    <property type="method" value="EM"/>
    <property type="resolution" value="3.90 A"/>
    <property type="chains" value="A/B/C/D/E/F/G/H/I/J/K/L/M/N/O/P=1-1370"/>
</dbReference>
<dbReference type="PDB" id="7ET3">
    <property type="method" value="EM"/>
    <property type="resolution" value="4.20 A"/>
    <property type="chains" value="B/C/D/Y/Z/a=1-1370"/>
</dbReference>
<dbReference type="PDB" id="7LIV">
    <property type="method" value="EM"/>
    <property type="resolution" value="3.60 A"/>
    <property type="chains" value="A/C/J=1-1370"/>
</dbReference>
<dbReference type="PDB" id="8TEP">
    <property type="method" value="EM"/>
    <property type="resolution" value="3.50 A"/>
    <property type="chains" value="H/I/J/K/L/M=1-1370"/>
</dbReference>
<dbReference type="PDB" id="8TES">
    <property type="method" value="EM"/>
    <property type="resolution" value="3.27 A"/>
    <property type="chains" value="H/I/J/K/L/M=1-1370"/>
</dbReference>
<dbReference type="PDB" id="8TET">
    <property type="method" value="EM"/>
    <property type="resolution" value="4.26 A"/>
    <property type="chains" value="H/I/J/K/L/M=1-1370"/>
</dbReference>
<dbReference type="PDB" id="8TEU">
    <property type="method" value="EM"/>
    <property type="resolution" value="4.01 A"/>
    <property type="chains" value="H/I/J/K/L/M=1-1370"/>
</dbReference>
<dbReference type="PDB" id="8TEW">
    <property type="method" value="EM"/>
    <property type="resolution" value="3.02 A"/>
    <property type="chains" value="1/H/I/J/K/L/M=1-1370"/>
</dbReference>
<dbReference type="PDBsum" id="5VKU"/>
<dbReference type="PDBsum" id="7ET3"/>
<dbReference type="PDBsum" id="7LIV"/>
<dbReference type="PDBsum" id="8TEP"/>
<dbReference type="PDBsum" id="8TES"/>
<dbReference type="PDBsum" id="8TET"/>
<dbReference type="PDBsum" id="8TEU"/>
<dbReference type="PDBsum" id="8TEW"/>
<dbReference type="EMDB" id="EMD-23386"/>
<dbReference type="EMDB" id="EMD-41194"/>
<dbReference type="EMDB" id="EMD-41200"/>
<dbReference type="EMDB" id="EMD-41201"/>
<dbReference type="EMDB" id="EMD-41202"/>
<dbReference type="EMDB" id="EMD-41204"/>
<dbReference type="EMDB" id="EMD-44639"/>
<dbReference type="EMDB" id="EMD-44640"/>
<dbReference type="EMDB" id="EMD-44647"/>
<dbReference type="EMDB" id="EMD-44648"/>
<dbReference type="EMDB" id="EMD-8703"/>
<dbReference type="SMR" id="P16729"/>
<dbReference type="IntAct" id="P16729">
    <property type="interactions" value="4"/>
</dbReference>
<dbReference type="GeneID" id="3077538"/>
<dbReference type="KEGG" id="vg:3077538"/>
<dbReference type="Proteomes" id="UP000008991">
    <property type="component" value="Segment"/>
</dbReference>
<dbReference type="Proteomes" id="UP000008992">
    <property type="component" value="Segment"/>
</dbReference>
<dbReference type="GO" id="GO:0042025">
    <property type="term" value="C:host cell nucleus"/>
    <property type="evidence" value="ECO:0007669"/>
    <property type="project" value="UniProtKB-SubCell"/>
</dbReference>
<dbReference type="GO" id="GO:0039622">
    <property type="term" value="C:T=16 icosahedral viral capsid"/>
    <property type="evidence" value="ECO:0007669"/>
    <property type="project" value="UniProtKB-KW"/>
</dbReference>
<dbReference type="GO" id="GO:0005198">
    <property type="term" value="F:structural molecule activity"/>
    <property type="evidence" value="ECO:0007669"/>
    <property type="project" value="InterPro"/>
</dbReference>
<dbReference type="HAMAP" id="MF_04016">
    <property type="entry name" value="HSV_MCP"/>
    <property type="match status" value="1"/>
</dbReference>
<dbReference type="InterPro" id="IPR000912">
    <property type="entry name" value="Herpes_MCP"/>
</dbReference>
<dbReference type="InterPro" id="IPR023233">
    <property type="entry name" value="Herpes_MCP_upper_sf"/>
</dbReference>
<dbReference type="Pfam" id="PF03122">
    <property type="entry name" value="Herpes_MCP"/>
    <property type="match status" value="1"/>
</dbReference>
<dbReference type="PRINTS" id="PR00235">
    <property type="entry name" value="HSVCAPSIDMCP"/>
</dbReference>
<dbReference type="SUPFAM" id="SSF103417">
    <property type="entry name" value="Major capsid protein VP5"/>
    <property type="match status" value="1"/>
</dbReference>
<accession>P16729</accession>
<accession>Q7M6K5</accession>
<evidence type="ECO:0000255" key="1">
    <source>
        <dbReference type="HAMAP-Rule" id="MF_04016"/>
    </source>
</evidence>
<evidence type="ECO:0007829" key="2">
    <source>
        <dbReference type="PDB" id="8TES"/>
    </source>
</evidence>
<reference key="1">
    <citation type="journal article" date="1989" name="J. Virol.">
        <title>Identification of the major capsid protein gene of human cytomegalovirus.</title>
        <authorList>
            <person name="Chee M.S."/>
            <person name="Rudolph S.A."/>
            <person name="Plachter R."/>
            <person name="Barrell B.G."/>
            <person name="Jahn G."/>
        </authorList>
    </citation>
    <scope>NUCLEOTIDE SEQUENCE [GENOMIC DNA]</scope>
</reference>
<reference key="2">
    <citation type="journal article" date="1990" name="Curr. Top. Microbiol. Immunol.">
        <title>Analysis of the protein-coding content of the sequence of human cytomegalovirus strain AD169.</title>
        <authorList>
            <person name="Chee M.S."/>
            <person name="Bankier A.T."/>
            <person name="Beck S."/>
            <person name="Bohni R."/>
            <person name="Brown C.M."/>
            <person name="Cerny R."/>
            <person name="Horsnell T."/>
            <person name="Hutchison C.A. III"/>
            <person name="Kouzarides T."/>
            <person name="Martignetti J.A."/>
            <person name="Preddie E."/>
            <person name="Satchwell S.C."/>
            <person name="Tomlinson P."/>
            <person name="Weston K.M."/>
            <person name="Barrell B.G."/>
        </authorList>
    </citation>
    <scope>NUCLEOTIDE SEQUENCE [LARGE SCALE GENOMIC DNA]</scope>
</reference>
<reference key="3">
    <citation type="journal article" date="2003" name="J. Gen. Virol.">
        <title>The human cytomegalovirus genome revisited: comparison with the chimpanzee cytomegalovirus genome.</title>
        <authorList>
            <person name="Davison A.J."/>
            <person name="Dolan A."/>
            <person name="Akter P."/>
            <person name="Addison C."/>
            <person name="Dargan D.J."/>
            <person name="Alcendor D.J."/>
            <person name="McGeoch D.J."/>
            <person name="Hayward G.S."/>
        </authorList>
    </citation>
    <scope>GENOME REANNOTATION</scope>
</reference>
<reference key="4">
    <citation type="journal article" date="2003" name="J. Gen. Virol.">
        <authorList>
            <person name="Davison A.J."/>
            <person name="Dolan A."/>
            <person name="Akter P."/>
            <person name="Addison C."/>
            <person name="Dargan D.J."/>
            <person name="Alcendor D.J."/>
            <person name="McGeoch D.J."/>
            <person name="Hayward G.S."/>
        </authorList>
    </citation>
    <scope>ERRATUM OF PUBMED:12533697</scope>
</reference>
<reference key="5">
    <citation type="journal article" date="2004" name="J. Virol.">
        <title>Identification of proteins in human cytomegalovirus (HCMV) particles: the HCMV proteome.</title>
        <authorList>
            <person name="Varnum S.M."/>
            <person name="Streblow D.N."/>
            <person name="Monroe M.E."/>
            <person name="Smith P."/>
            <person name="Auberry K.J."/>
            <person name="Pasa-Tolic L."/>
            <person name="Wang D."/>
            <person name="Camp D.G. II"/>
            <person name="Rodland K."/>
            <person name="Wiley S."/>
            <person name="Britt W."/>
            <person name="Shenk T."/>
            <person name="Smith R.D."/>
            <person name="Nelson J.A."/>
        </authorList>
    </citation>
    <scope>IDENTIFICATION</scope>
</reference>
<reference key="6">
    <citation type="journal article" date="2004" name="J. Virol.">
        <authorList>
            <person name="Varnum S.M."/>
            <person name="Streblow D.N."/>
            <person name="Monroe M.E."/>
            <person name="Smith P."/>
            <person name="Auberry K.J."/>
            <person name="Pasa-Tolic L."/>
            <person name="Wang D."/>
            <person name="Camp D.G. II"/>
            <person name="Rodland K."/>
            <person name="Wiley S."/>
            <person name="Britt W."/>
            <person name="Shenk T."/>
            <person name="Smith R.D."/>
            <person name="Nelson J.A."/>
        </authorList>
    </citation>
    <scope>ERRATUM OF PUBMED:15452216</scope>
</reference>